<evidence type="ECO:0000255" key="1">
    <source>
        <dbReference type="HAMAP-Rule" id="MF_01367"/>
    </source>
</evidence>
<evidence type="ECO:0000305" key="2"/>
<keyword id="KW-1185">Reference proteome</keyword>
<keyword id="KW-0687">Ribonucleoprotein</keyword>
<keyword id="KW-0689">Ribosomal protein</keyword>
<keyword id="KW-0694">RNA-binding</keyword>
<keyword id="KW-0699">rRNA-binding</keyword>
<sequence length="122" mass="13331">MIQVQTILKAADNTGARKLMCIRVMGGSLRRYASVGDIIVASVKEATPGGVVKKGDVVKCVVVRTSKEVRRPDGSYIKFDENAAVVIKDDKTPRGTRIFGPVARELREKDFMKIVSLAPEVI</sequence>
<gene>
    <name evidence="1" type="primary">rplN</name>
    <name type="ordered locus">Dred_0225</name>
</gene>
<name>RL14_DESRM</name>
<comment type="function">
    <text evidence="1">Binds to 23S rRNA. Forms part of two intersubunit bridges in the 70S ribosome.</text>
</comment>
<comment type="subunit">
    <text evidence="1">Part of the 50S ribosomal subunit. Forms a cluster with proteins L3 and L19. In the 70S ribosome, L14 and L19 interact and together make contacts with the 16S rRNA in bridges B5 and B8.</text>
</comment>
<comment type="similarity">
    <text evidence="1">Belongs to the universal ribosomal protein uL14 family.</text>
</comment>
<organism>
    <name type="scientific">Desulforamulus reducens (strain ATCC BAA-1160 / DSM 100696 / MI-1)</name>
    <name type="common">Desulfotomaculum reducens</name>
    <dbReference type="NCBI Taxonomy" id="349161"/>
    <lineage>
        <taxon>Bacteria</taxon>
        <taxon>Bacillati</taxon>
        <taxon>Bacillota</taxon>
        <taxon>Clostridia</taxon>
        <taxon>Eubacteriales</taxon>
        <taxon>Peptococcaceae</taxon>
        <taxon>Desulforamulus</taxon>
    </lineage>
</organism>
<protein>
    <recommendedName>
        <fullName evidence="1">Large ribosomal subunit protein uL14</fullName>
    </recommendedName>
    <alternativeName>
        <fullName evidence="2">50S ribosomal protein L14</fullName>
    </alternativeName>
</protein>
<reference key="1">
    <citation type="submission" date="2007-03" db="EMBL/GenBank/DDBJ databases">
        <title>Complete sequence of Desulfotomaculum reducens MI-1.</title>
        <authorList>
            <consortium name="US DOE Joint Genome Institute"/>
            <person name="Copeland A."/>
            <person name="Lucas S."/>
            <person name="Lapidus A."/>
            <person name="Barry K."/>
            <person name="Detter J.C."/>
            <person name="Glavina del Rio T."/>
            <person name="Hammon N."/>
            <person name="Israni S."/>
            <person name="Dalin E."/>
            <person name="Tice H."/>
            <person name="Pitluck S."/>
            <person name="Sims D."/>
            <person name="Brettin T."/>
            <person name="Bruce D."/>
            <person name="Han C."/>
            <person name="Tapia R."/>
            <person name="Schmutz J."/>
            <person name="Larimer F."/>
            <person name="Land M."/>
            <person name="Hauser L."/>
            <person name="Kyrpides N."/>
            <person name="Kim E."/>
            <person name="Tebo B.M."/>
            <person name="Richardson P."/>
        </authorList>
    </citation>
    <scope>NUCLEOTIDE SEQUENCE [LARGE SCALE GENOMIC DNA]</scope>
    <source>
        <strain>ATCC BAA-1160 / DSM 100696 / MI-1</strain>
    </source>
</reference>
<feature type="chain" id="PRO_1000073421" description="Large ribosomal subunit protein uL14">
    <location>
        <begin position="1"/>
        <end position="122"/>
    </location>
</feature>
<proteinExistence type="inferred from homology"/>
<dbReference type="EMBL" id="CP000612">
    <property type="protein sequence ID" value="ABO48774.1"/>
    <property type="molecule type" value="Genomic_DNA"/>
</dbReference>
<dbReference type="RefSeq" id="WP_011876614.1">
    <property type="nucleotide sequence ID" value="NC_009253.1"/>
</dbReference>
<dbReference type="SMR" id="A4J121"/>
<dbReference type="STRING" id="349161.Dred_0225"/>
<dbReference type="KEGG" id="drm:Dred_0225"/>
<dbReference type="eggNOG" id="COG0093">
    <property type="taxonomic scope" value="Bacteria"/>
</dbReference>
<dbReference type="HOGENOM" id="CLU_095071_2_1_9"/>
<dbReference type="OrthoDB" id="9806379at2"/>
<dbReference type="Proteomes" id="UP000001556">
    <property type="component" value="Chromosome"/>
</dbReference>
<dbReference type="GO" id="GO:0022625">
    <property type="term" value="C:cytosolic large ribosomal subunit"/>
    <property type="evidence" value="ECO:0007669"/>
    <property type="project" value="TreeGrafter"/>
</dbReference>
<dbReference type="GO" id="GO:0070180">
    <property type="term" value="F:large ribosomal subunit rRNA binding"/>
    <property type="evidence" value="ECO:0007669"/>
    <property type="project" value="TreeGrafter"/>
</dbReference>
<dbReference type="GO" id="GO:0003735">
    <property type="term" value="F:structural constituent of ribosome"/>
    <property type="evidence" value="ECO:0007669"/>
    <property type="project" value="InterPro"/>
</dbReference>
<dbReference type="GO" id="GO:0006412">
    <property type="term" value="P:translation"/>
    <property type="evidence" value="ECO:0007669"/>
    <property type="project" value="UniProtKB-UniRule"/>
</dbReference>
<dbReference type="CDD" id="cd00337">
    <property type="entry name" value="Ribosomal_uL14"/>
    <property type="match status" value="1"/>
</dbReference>
<dbReference type="FunFam" id="2.40.150.20:FF:000001">
    <property type="entry name" value="50S ribosomal protein L14"/>
    <property type="match status" value="1"/>
</dbReference>
<dbReference type="Gene3D" id="2.40.150.20">
    <property type="entry name" value="Ribosomal protein L14"/>
    <property type="match status" value="1"/>
</dbReference>
<dbReference type="HAMAP" id="MF_01367">
    <property type="entry name" value="Ribosomal_uL14"/>
    <property type="match status" value="1"/>
</dbReference>
<dbReference type="InterPro" id="IPR000218">
    <property type="entry name" value="Ribosomal_uL14"/>
</dbReference>
<dbReference type="InterPro" id="IPR005745">
    <property type="entry name" value="Ribosomal_uL14_bac-type"/>
</dbReference>
<dbReference type="InterPro" id="IPR036853">
    <property type="entry name" value="Ribosomal_uL14_sf"/>
</dbReference>
<dbReference type="NCBIfam" id="TIGR01067">
    <property type="entry name" value="rplN_bact"/>
    <property type="match status" value="1"/>
</dbReference>
<dbReference type="PANTHER" id="PTHR11761">
    <property type="entry name" value="50S/60S RIBOSOMAL PROTEIN L14/L23"/>
    <property type="match status" value="1"/>
</dbReference>
<dbReference type="PANTHER" id="PTHR11761:SF3">
    <property type="entry name" value="LARGE RIBOSOMAL SUBUNIT PROTEIN UL14M"/>
    <property type="match status" value="1"/>
</dbReference>
<dbReference type="Pfam" id="PF00238">
    <property type="entry name" value="Ribosomal_L14"/>
    <property type="match status" value="1"/>
</dbReference>
<dbReference type="SMART" id="SM01374">
    <property type="entry name" value="Ribosomal_L14"/>
    <property type="match status" value="1"/>
</dbReference>
<dbReference type="SUPFAM" id="SSF50193">
    <property type="entry name" value="Ribosomal protein L14"/>
    <property type="match status" value="1"/>
</dbReference>
<accession>A4J121</accession>